<dbReference type="EMBL" id="CP000116">
    <property type="protein sequence ID" value="AAZ98159.1"/>
    <property type="molecule type" value="Genomic_DNA"/>
</dbReference>
<dbReference type="RefSeq" id="WP_011312718.1">
    <property type="nucleotide sequence ID" value="NC_007404.1"/>
</dbReference>
<dbReference type="SMR" id="Q3SGT4"/>
<dbReference type="STRING" id="292415.Tbd_2206"/>
<dbReference type="KEGG" id="tbd:Tbd_2206"/>
<dbReference type="eggNOG" id="COG0823">
    <property type="taxonomic scope" value="Bacteria"/>
</dbReference>
<dbReference type="HOGENOM" id="CLU_047123_0_0_4"/>
<dbReference type="OrthoDB" id="9802240at2"/>
<dbReference type="Proteomes" id="UP000008291">
    <property type="component" value="Chromosome"/>
</dbReference>
<dbReference type="GO" id="GO:0042597">
    <property type="term" value="C:periplasmic space"/>
    <property type="evidence" value="ECO:0007669"/>
    <property type="project" value="UniProtKB-SubCell"/>
</dbReference>
<dbReference type="GO" id="GO:0051301">
    <property type="term" value="P:cell division"/>
    <property type="evidence" value="ECO:0007669"/>
    <property type="project" value="UniProtKB-UniRule"/>
</dbReference>
<dbReference type="GO" id="GO:0017038">
    <property type="term" value="P:protein import"/>
    <property type="evidence" value="ECO:0007669"/>
    <property type="project" value="InterPro"/>
</dbReference>
<dbReference type="Gene3D" id="2.120.10.30">
    <property type="entry name" value="TolB, C-terminal domain"/>
    <property type="match status" value="1"/>
</dbReference>
<dbReference type="Gene3D" id="3.40.50.10070">
    <property type="entry name" value="TolB, N-terminal domain"/>
    <property type="match status" value="1"/>
</dbReference>
<dbReference type="HAMAP" id="MF_00671">
    <property type="entry name" value="TolB"/>
    <property type="match status" value="1"/>
</dbReference>
<dbReference type="InterPro" id="IPR011042">
    <property type="entry name" value="6-blade_b-propeller_TolB-like"/>
</dbReference>
<dbReference type="InterPro" id="IPR011659">
    <property type="entry name" value="PD40"/>
</dbReference>
<dbReference type="InterPro" id="IPR014167">
    <property type="entry name" value="Tol-Pal_TolB"/>
</dbReference>
<dbReference type="InterPro" id="IPR007195">
    <property type="entry name" value="TolB_N"/>
</dbReference>
<dbReference type="NCBIfam" id="TIGR02800">
    <property type="entry name" value="propeller_TolB"/>
    <property type="match status" value="1"/>
</dbReference>
<dbReference type="PANTHER" id="PTHR36842:SF1">
    <property type="entry name" value="PROTEIN TOLB"/>
    <property type="match status" value="1"/>
</dbReference>
<dbReference type="PANTHER" id="PTHR36842">
    <property type="entry name" value="PROTEIN TOLB HOMOLOG"/>
    <property type="match status" value="1"/>
</dbReference>
<dbReference type="Pfam" id="PF07676">
    <property type="entry name" value="PD40"/>
    <property type="match status" value="5"/>
</dbReference>
<dbReference type="Pfam" id="PF04052">
    <property type="entry name" value="TolB_N"/>
    <property type="match status" value="1"/>
</dbReference>
<dbReference type="SUPFAM" id="SSF52964">
    <property type="entry name" value="TolB, N-terminal domain"/>
    <property type="match status" value="1"/>
</dbReference>
<dbReference type="SUPFAM" id="SSF69304">
    <property type="entry name" value="Tricorn protease N-terminal domain"/>
    <property type="match status" value="1"/>
</dbReference>
<comment type="function">
    <text evidence="1">Part of the Tol-Pal system, which plays a role in outer membrane invagination during cell division and is important for maintaining outer membrane integrity.</text>
</comment>
<comment type="subunit">
    <text evidence="1">The Tol-Pal system is composed of five core proteins: the inner membrane proteins TolA, TolQ and TolR, the periplasmic protein TolB and the outer membrane protein Pal. They form a network linking the inner and outer membranes and the peptidoglycan layer.</text>
</comment>
<comment type="subcellular location">
    <subcellularLocation>
        <location evidence="1">Periplasm</location>
    </subcellularLocation>
</comment>
<comment type="similarity">
    <text evidence="1">Belongs to the TolB family.</text>
</comment>
<sequence>MPVSLLRALLVFSLLCLGLSATRAAHAAMEIEVVGGAANKIAIAMVPFQTAAGQPSPPLTQIVADDLARSGQFSMTDVTGAAQPVEPSQVDYAAWRTKGAEAMVIGQVVALGGGRFEVRFRLLDVVKGTQLAGYSYKITAAQWRATGHRIADVVYEKLTGIPGAFSSRIAYVQKQGKRYELRVADADGQNPRTIVRSLEPLISPMFSPDGTRLAYVSFEDKKPVVYVQSLQQGGRRKVAAFKGSNSAPAWSPDGRQLAVVLTRDGASQIYLINVDGSGLTRLMRSGDIDTEPVFSPDGQTLYFTSDRGGSPQIYRVAKSGGDAKRVSFEGSYNVSPTISPDGRYLAYISRDGGRFRVVLQELASGQTRVLTETTRDEAPSFAPNGQAVLYATVQGGRGVLGTVTLDGKTRARLSESGVDAREPAWGP</sequence>
<proteinExistence type="inferred from homology"/>
<evidence type="ECO:0000255" key="1">
    <source>
        <dbReference type="HAMAP-Rule" id="MF_00671"/>
    </source>
</evidence>
<reference key="1">
    <citation type="journal article" date="2006" name="J. Bacteriol.">
        <title>The genome sequence of the obligately chemolithoautotrophic, facultatively anaerobic bacterium Thiobacillus denitrificans.</title>
        <authorList>
            <person name="Beller H.R."/>
            <person name="Chain P.S."/>
            <person name="Letain T.E."/>
            <person name="Chakicherla A."/>
            <person name="Larimer F.W."/>
            <person name="Richardson P.M."/>
            <person name="Coleman M.A."/>
            <person name="Wood A.P."/>
            <person name="Kelly D.P."/>
        </authorList>
    </citation>
    <scope>NUCLEOTIDE SEQUENCE [LARGE SCALE GENOMIC DNA]</scope>
    <source>
        <strain>ATCC 25259 / T1</strain>
    </source>
</reference>
<feature type="signal peptide" evidence="1">
    <location>
        <begin position="1"/>
        <end position="27"/>
    </location>
</feature>
<feature type="chain" id="PRO_0000259095" description="Tol-Pal system protein TolB" evidence="1">
    <location>
        <begin position="28"/>
        <end position="427"/>
    </location>
</feature>
<keyword id="KW-0131">Cell cycle</keyword>
<keyword id="KW-0132">Cell division</keyword>
<keyword id="KW-0574">Periplasm</keyword>
<keyword id="KW-1185">Reference proteome</keyword>
<keyword id="KW-0732">Signal</keyword>
<name>TOLB_THIDA</name>
<accession>Q3SGT4</accession>
<protein>
    <recommendedName>
        <fullName evidence="1">Tol-Pal system protein TolB</fullName>
    </recommendedName>
</protein>
<organism>
    <name type="scientific">Thiobacillus denitrificans (strain ATCC 25259 / T1)</name>
    <dbReference type="NCBI Taxonomy" id="292415"/>
    <lineage>
        <taxon>Bacteria</taxon>
        <taxon>Pseudomonadati</taxon>
        <taxon>Pseudomonadota</taxon>
        <taxon>Betaproteobacteria</taxon>
        <taxon>Nitrosomonadales</taxon>
        <taxon>Thiobacillaceae</taxon>
        <taxon>Thiobacillus</taxon>
    </lineage>
</organism>
<gene>
    <name evidence="1" type="primary">tolB</name>
    <name type="ordered locus">Tbd_2206</name>
</gene>